<feature type="chain" id="PRO_1000085379" description="Undecaprenyl-phosphate 4-deoxy-4-formamido-L-arabinose transferase">
    <location>
        <begin position="1"/>
        <end position="327"/>
    </location>
</feature>
<feature type="topological domain" description="Cytoplasmic" evidence="1">
    <location>
        <begin position="1"/>
        <end position="235"/>
    </location>
</feature>
<feature type="transmembrane region" description="Helical" evidence="1">
    <location>
        <begin position="236"/>
        <end position="256"/>
    </location>
</feature>
<feature type="topological domain" description="Periplasmic" evidence="1">
    <location>
        <begin position="257"/>
        <end position="269"/>
    </location>
</feature>
<feature type="transmembrane region" description="Helical" evidence="1">
    <location>
        <begin position="270"/>
        <end position="290"/>
    </location>
</feature>
<feature type="topological domain" description="Cytoplasmic" evidence="1">
    <location>
        <begin position="291"/>
        <end position="327"/>
    </location>
</feature>
<sequence length="327" mass="36506">MFDAAPIKKVSVVIPVYNEQESLPELIRRTTTACESLGKAWEILLIDDGSSDSSAELMVKASQEADSHIISILLNRNYGQHAAIMAGFSHVSGDLIITLDADLQNPPEEIPRLVAKADEGFDVVGTVRQNRQDSLFRKSASKIINLLIQRTTGKAMGDYGCMLRAYRRPIIDTMLRCHERSTFIPILANIFARRATEIPVHHAEREFGDSKYSFMRLINLMYDLVTCLTTTPLRLLSLLGSVIAIGGFSLSVLLIVLRLALGPQWAAEGVFMLFAVLFTFIGAQFIGMGLLGEYIGRIYNDVRARPRYFVQQVIYPESTSFTEESHQ</sequence>
<organism>
    <name type="scientific">Salmonella paratyphi B (strain ATCC BAA-1250 / SPB7)</name>
    <dbReference type="NCBI Taxonomy" id="1016998"/>
    <lineage>
        <taxon>Bacteria</taxon>
        <taxon>Pseudomonadati</taxon>
        <taxon>Pseudomonadota</taxon>
        <taxon>Gammaproteobacteria</taxon>
        <taxon>Enterobacterales</taxon>
        <taxon>Enterobacteriaceae</taxon>
        <taxon>Salmonella</taxon>
    </lineage>
</organism>
<evidence type="ECO:0000255" key="1">
    <source>
        <dbReference type="HAMAP-Rule" id="MF_01164"/>
    </source>
</evidence>
<reference key="1">
    <citation type="submission" date="2007-11" db="EMBL/GenBank/DDBJ databases">
        <authorList>
            <consortium name="The Salmonella enterica serovar Paratyphi B Genome Sequencing Project"/>
            <person name="McClelland M."/>
            <person name="Sanderson E.K."/>
            <person name="Porwollik S."/>
            <person name="Spieth J."/>
            <person name="Clifton W.S."/>
            <person name="Fulton R."/>
            <person name="Cordes M."/>
            <person name="Wollam A."/>
            <person name="Shah N."/>
            <person name="Pepin K."/>
            <person name="Bhonagiri V."/>
            <person name="Nash W."/>
            <person name="Johnson M."/>
            <person name="Thiruvilangam P."/>
            <person name="Wilson R."/>
        </authorList>
    </citation>
    <scope>NUCLEOTIDE SEQUENCE [LARGE SCALE GENOMIC DNA]</scope>
    <source>
        <strain>ATCC BAA-1250 / SPB7</strain>
    </source>
</reference>
<protein>
    <recommendedName>
        <fullName evidence="1">Undecaprenyl-phosphate 4-deoxy-4-formamido-L-arabinose transferase</fullName>
        <ecNumber evidence="1">2.4.2.53</ecNumber>
    </recommendedName>
    <alternativeName>
        <fullName evidence="1">Undecaprenyl-phosphate Ara4FN transferase</fullName>
        <shortName evidence="1">Ara4FN transferase</shortName>
    </alternativeName>
</protein>
<comment type="function">
    <text evidence="1">Catalyzes the transfer of 4-deoxy-4-formamido-L-arabinose from UDP to undecaprenyl phosphate. The modified arabinose is attached to lipid A and is required for resistance to polymyxin and cationic antimicrobial peptides.</text>
</comment>
<comment type="catalytic activity">
    <reaction evidence="1">
        <text>UDP-4-deoxy-4-formamido-beta-L-arabinose + di-trans,octa-cis-undecaprenyl phosphate = 4-deoxy-4-formamido-alpha-L-arabinopyranosyl di-trans,octa-cis-undecaprenyl phosphate + UDP</text>
        <dbReference type="Rhea" id="RHEA:27722"/>
        <dbReference type="ChEBI" id="CHEBI:58223"/>
        <dbReference type="ChEBI" id="CHEBI:58709"/>
        <dbReference type="ChEBI" id="CHEBI:58909"/>
        <dbReference type="ChEBI" id="CHEBI:60392"/>
        <dbReference type="EC" id="2.4.2.53"/>
    </reaction>
</comment>
<comment type="pathway">
    <text evidence="1">Glycolipid biosynthesis; 4-amino-4-deoxy-alpha-L-arabinose undecaprenyl phosphate biosynthesis; 4-amino-4-deoxy-alpha-L-arabinose undecaprenyl phosphate from UDP-4-deoxy-4-formamido-beta-L-arabinose and undecaprenyl phosphate: step 1/2.</text>
</comment>
<comment type="pathway">
    <text evidence="1">Bacterial outer membrane biogenesis; lipopolysaccharide biosynthesis.</text>
</comment>
<comment type="subcellular location">
    <subcellularLocation>
        <location evidence="1">Cell inner membrane</location>
        <topology evidence="1">Multi-pass membrane protein</topology>
    </subcellularLocation>
</comment>
<comment type="similarity">
    <text evidence="1">Belongs to the glycosyltransferase 2 family.</text>
</comment>
<dbReference type="EC" id="2.4.2.53" evidence="1"/>
<dbReference type="EMBL" id="CP000886">
    <property type="protein sequence ID" value="ABX66109.1"/>
    <property type="molecule type" value="Genomic_DNA"/>
</dbReference>
<dbReference type="RefSeq" id="WP_000458894.1">
    <property type="nucleotide sequence ID" value="NC_010102.1"/>
</dbReference>
<dbReference type="SMR" id="A9N5B3"/>
<dbReference type="CAZy" id="GT2">
    <property type="family name" value="Glycosyltransferase Family 2"/>
</dbReference>
<dbReference type="KEGG" id="spq:SPAB_00683"/>
<dbReference type="PATRIC" id="fig|1016998.12.peg.643"/>
<dbReference type="HOGENOM" id="CLU_033536_0_0_6"/>
<dbReference type="BioCyc" id="SENT1016998:SPAB_RS02845-MONOMER"/>
<dbReference type="UniPathway" id="UPA00030"/>
<dbReference type="UniPathway" id="UPA00036">
    <property type="reaction ID" value="UER00495"/>
</dbReference>
<dbReference type="Proteomes" id="UP000008556">
    <property type="component" value="Chromosome"/>
</dbReference>
<dbReference type="GO" id="GO:0005886">
    <property type="term" value="C:plasma membrane"/>
    <property type="evidence" value="ECO:0007669"/>
    <property type="project" value="UniProtKB-SubCell"/>
</dbReference>
<dbReference type="GO" id="GO:0016780">
    <property type="term" value="F:phosphotransferase activity, for other substituted phosphate groups"/>
    <property type="evidence" value="ECO:0007669"/>
    <property type="project" value="UniProtKB-UniRule"/>
</dbReference>
<dbReference type="GO" id="GO:0099621">
    <property type="term" value="F:undecaprenyl-phosphate 4-deoxy-4-formamido-L-arabinose transferase activity"/>
    <property type="evidence" value="ECO:0007669"/>
    <property type="project" value="UniProtKB-EC"/>
</dbReference>
<dbReference type="GO" id="GO:0036108">
    <property type="term" value="P:4-amino-4-deoxy-alpha-L-arabinopyranosyl undecaprenyl phosphate biosynthetic process"/>
    <property type="evidence" value="ECO:0007669"/>
    <property type="project" value="UniProtKB-UniRule"/>
</dbReference>
<dbReference type="GO" id="GO:0009245">
    <property type="term" value="P:lipid A biosynthetic process"/>
    <property type="evidence" value="ECO:0007669"/>
    <property type="project" value="UniProtKB-UniRule"/>
</dbReference>
<dbReference type="GO" id="GO:0009103">
    <property type="term" value="P:lipopolysaccharide biosynthetic process"/>
    <property type="evidence" value="ECO:0007669"/>
    <property type="project" value="UniProtKB-UniRule"/>
</dbReference>
<dbReference type="GO" id="GO:0046677">
    <property type="term" value="P:response to antibiotic"/>
    <property type="evidence" value="ECO:0007669"/>
    <property type="project" value="UniProtKB-KW"/>
</dbReference>
<dbReference type="CDD" id="cd04187">
    <property type="entry name" value="DPM1_like_bac"/>
    <property type="match status" value="1"/>
</dbReference>
<dbReference type="FunFam" id="3.90.550.10:FF:000019">
    <property type="entry name" value="Undecaprenyl-phosphate 4-deoxy-4-formamido-L-arabinose transferase"/>
    <property type="match status" value="1"/>
</dbReference>
<dbReference type="Gene3D" id="3.90.550.10">
    <property type="entry name" value="Spore Coat Polysaccharide Biosynthesis Protein SpsA, Chain A"/>
    <property type="match status" value="1"/>
</dbReference>
<dbReference type="HAMAP" id="MF_01164">
    <property type="entry name" value="ArnC_transfer"/>
    <property type="match status" value="1"/>
</dbReference>
<dbReference type="InterPro" id="IPR022857">
    <property type="entry name" value="ArnC_tfrase"/>
</dbReference>
<dbReference type="InterPro" id="IPR001173">
    <property type="entry name" value="Glyco_trans_2-like"/>
</dbReference>
<dbReference type="InterPro" id="IPR050256">
    <property type="entry name" value="Glycosyltransferase_2"/>
</dbReference>
<dbReference type="InterPro" id="IPR029044">
    <property type="entry name" value="Nucleotide-diphossugar_trans"/>
</dbReference>
<dbReference type="NCBIfam" id="NF007986">
    <property type="entry name" value="PRK10714.1"/>
    <property type="match status" value="1"/>
</dbReference>
<dbReference type="PANTHER" id="PTHR48090:SF3">
    <property type="entry name" value="UNDECAPRENYL-PHOSPHATE 4-DEOXY-4-FORMAMIDO-L-ARABINOSE TRANSFERASE"/>
    <property type="match status" value="1"/>
</dbReference>
<dbReference type="PANTHER" id="PTHR48090">
    <property type="entry name" value="UNDECAPRENYL-PHOSPHATE 4-DEOXY-4-FORMAMIDO-L-ARABINOSE TRANSFERASE-RELATED"/>
    <property type="match status" value="1"/>
</dbReference>
<dbReference type="Pfam" id="PF00535">
    <property type="entry name" value="Glycos_transf_2"/>
    <property type="match status" value="1"/>
</dbReference>
<dbReference type="SUPFAM" id="SSF53448">
    <property type="entry name" value="Nucleotide-diphospho-sugar transferases"/>
    <property type="match status" value="1"/>
</dbReference>
<gene>
    <name evidence="1" type="primary">arnC</name>
    <name type="ordered locus">SPAB_00683</name>
</gene>
<accession>A9N5B3</accession>
<name>ARNC_SALPB</name>
<keyword id="KW-0046">Antibiotic resistance</keyword>
<keyword id="KW-0997">Cell inner membrane</keyword>
<keyword id="KW-1003">Cell membrane</keyword>
<keyword id="KW-0328">Glycosyltransferase</keyword>
<keyword id="KW-0441">Lipid A biosynthesis</keyword>
<keyword id="KW-0444">Lipid biosynthesis</keyword>
<keyword id="KW-0443">Lipid metabolism</keyword>
<keyword id="KW-0448">Lipopolysaccharide biosynthesis</keyword>
<keyword id="KW-0472">Membrane</keyword>
<keyword id="KW-0808">Transferase</keyword>
<keyword id="KW-0812">Transmembrane</keyword>
<keyword id="KW-1133">Transmembrane helix</keyword>
<proteinExistence type="inferred from homology"/>